<name>KIN15_CAEEL</name>
<proteinExistence type="evidence at transcript level"/>
<comment type="function">
    <text>May be specifically involved in cell-cell interactions regulating cell fusions that generate the hypodermis during postembryonic development. It has a role in the development of the HYP7 hypodermal syncytium.</text>
</comment>
<comment type="catalytic activity">
    <reaction evidence="3">
        <text>L-tyrosyl-[protein] + ATP = O-phospho-L-tyrosyl-[protein] + ADP + H(+)</text>
        <dbReference type="Rhea" id="RHEA:10596"/>
        <dbReference type="Rhea" id="RHEA-COMP:10136"/>
        <dbReference type="Rhea" id="RHEA-COMP:20101"/>
        <dbReference type="ChEBI" id="CHEBI:15378"/>
        <dbReference type="ChEBI" id="CHEBI:30616"/>
        <dbReference type="ChEBI" id="CHEBI:46858"/>
        <dbReference type="ChEBI" id="CHEBI:61978"/>
        <dbReference type="ChEBI" id="CHEBI:456216"/>
        <dbReference type="EC" id="2.7.10.1"/>
    </reaction>
</comment>
<comment type="subcellular location">
    <subcellularLocation>
        <location evidence="4">Cell membrane</location>
        <topology evidence="4">Single-pass membrane protein</topology>
    </subcellularLocation>
</comment>
<comment type="tissue specificity">
    <text>Hypodermal cells.</text>
</comment>
<comment type="developmental stage">
    <text>Expressed during hypodermal development.</text>
</comment>
<comment type="similarity">
    <text evidence="2">Belongs to the protein kinase superfamily. Tyr protein kinase family.</text>
</comment>
<accession>P34891</accession>
<protein>
    <recommendedName>
        <fullName>Receptor-like tyrosine-protein kinase kin-15</fullName>
        <ecNumber>2.7.10.1</ecNumber>
    </recommendedName>
</protein>
<feature type="signal peptide" evidence="1">
    <location>
        <begin position="1"/>
        <end position="26"/>
    </location>
</feature>
<feature type="chain" id="PRO_0000024437" description="Receptor-like tyrosine-protein kinase kin-15">
    <location>
        <begin position="27"/>
        <end position="488"/>
    </location>
</feature>
<feature type="topological domain" description="Extracellular" evidence="1">
    <location>
        <begin position="27"/>
        <end position="50"/>
    </location>
</feature>
<feature type="transmembrane region" description="Helical" evidence="1">
    <location>
        <begin position="51"/>
        <end position="70"/>
    </location>
</feature>
<feature type="topological domain" description="Cytoplasmic" evidence="1">
    <location>
        <begin position="71"/>
        <end position="488"/>
    </location>
</feature>
<feature type="domain" description="Protein kinase" evidence="2">
    <location>
        <begin position="144"/>
        <end position="458"/>
    </location>
</feature>
<feature type="active site" description="Proton acceptor" evidence="2 3">
    <location>
        <position position="319"/>
    </location>
</feature>
<feature type="binding site" evidence="2">
    <location>
        <begin position="150"/>
        <end position="158"/>
    </location>
    <ligand>
        <name>ATP</name>
        <dbReference type="ChEBI" id="CHEBI:30616"/>
    </ligand>
</feature>
<feature type="binding site" evidence="2">
    <location>
        <position position="183"/>
    </location>
    <ligand>
        <name>ATP</name>
        <dbReference type="ChEBI" id="CHEBI:30616"/>
    </ligand>
</feature>
<feature type="glycosylation site" description="N-linked (GlcNAc...) asparagine" evidence="1">
    <location>
        <position position="25"/>
    </location>
</feature>
<organism>
    <name type="scientific">Caenorhabditis elegans</name>
    <dbReference type="NCBI Taxonomy" id="6239"/>
    <lineage>
        <taxon>Eukaryota</taxon>
        <taxon>Metazoa</taxon>
        <taxon>Ecdysozoa</taxon>
        <taxon>Nematoda</taxon>
        <taxon>Chromadorea</taxon>
        <taxon>Rhabditida</taxon>
        <taxon>Rhabditina</taxon>
        <taxon>Rhabditomorpha</taxon>
        <taxon>Rhabditoidea</taxon>
        <taxon>Rhabditidae</taxon>
        <taxon>Peloderinae</taxon>
        <taxon>Caenorhabditis</taxon>
    </lineage>
</organism>
<dbReference type="EC" id="2.7.10.1"/>
<dbReference type="EMBL" id="L03524">
    <property type="protein sequence ID" value="AAA28151.1"/>
    <property type="molecule type" value="Genomic_DNA"/>
</dbReference>
<dbReference type="EMBL" id="Z78412">
    <property type="protein sequence ID" value="CAB01648.2"/>
    <property type="molecule type" value="Genomic_DNA"/>
</dbReference>
<dbReference type="PIR" id="C88264">
    <property type="entry name" value="C88264"/>
</dbReference>
<dbReference type="PIR" id="I44330">
    <property type="entry name" value="I44330"/>
</dbReference>
<dbReference type="RefSeq" id="NP_741035.2">
    <property type="nucleotide sequence ID" value="NM_171855.4"/>
</dbReference>
<dbReference type="SMR" id="P34891"/>
<dbReference type="BioGRID" id="39821">
    <property type="interactions" value="1"/>
</dbReference>
<dbReference type="FunCoup" id="P34891">
    <property type="interactions" value="13"/>
</dbReference>
<dbReference type="STRING" id="6239.M176.6a.1"/>
<dbReference type="GlyCosmos" id="P34891">
    <property type="glycosylation" value="1 site, No reported glycans"/>
</dbReference>
<dbReference type="PaxDb" id="6239-M176.6a"/>
<dbReference type="EnsemblMetazoa" id="M176.6a.1">
    <property type="protein sequence ID" value="M176.6a.1"/>
    <property type="gene ID" value="WBGene00002199"/>
</dbReference>
<dbReference type="GeneID" id="174498"/>
<dbReference type="KEGG" id="cel:CELE_M176.6"/>
<dbReference type="UCSC" id="M176.6b">
    <property type="organism name" value="c. elegans"/>
</dbReference>
<dbReference type="AGR" id="WB:WBGene00002199"/>
<dbReference type="CTD" id="174498"/>
<dbReference type="WormBase" id="M176.6a">
    <property type="protein sequence ID" value="CE46897"/>
    <property type="gene ID" value="WBGene00002199"/>
    <property type="gene designation" value="kin-15"/>
</dbReference>
<dbReference type="eggNOG" id="KOG0200">
    <property type="taxonomic scope" value="Eukaryota"/>
</dbReference>
<dbReference type="InParanoid" id="P34891"/>
<dbReference type="OMA" id="HERIHYL"/>
<dbReference type="OrthoDB" id="5912975at2759"/>
<dbReference type="PhylomeDB" id="P34891"/>
<dbReference type="BRENDA" id="2.7.10.1">
    <property type="organism ID" value="1045"/>
</dbReference>
<dbReference type="PRO" id="PR:P34891"/>
<dbReference type="Proteomes" id="UP000001940">
    <property type="component" value="Chromosome II"/>
</dbReference>
<dbReference type="Bgee" id="WBGene00002199">
    <property type="expression patterns" value="Expressed in material anatomical entity and 2 other cell types or tissues"/>
</dbReference>
<dbReference type="ExpressionAtlas" id="P34891">
    <property type="expression patterns" value="baseline and differential"/>
</dbReference>
<dbReference type="GO" id="GO:0005886">
    <property type="term" value="C:plasma membrane"/>
    <property type="evidence" value="ECO:0000318"/>
    <property type="project" value="GO_Central"/>
</dbReference>
<dbReference type="GO" id="GO:0043235">
    <property type="term" value="C:receptor complex"/>
    <property type="evidence" value="ECO:0000318"/>
    <property type="project" value="GO_Central"/>
</dbReference>
<dbReference type="GO" id="GO:0005524">
    <property type="term" value="F:ATP binding"/>
    <property type="evidence" value="ECO:0007669"/>
    <property type="project" value="UniProtKB-KW"/>
</dbReference>
<dbReference type="GO" id="GO:0004714">
    <property type="term" value="F:transmembrane receptor protein tyrosine kinase activity"/>
    <property type="evidence" value="ECO:0000318"/>
    <property type="project" value="GO_Central"/>
</dbReference>
<dbReference type="GO" id="GO:0007169">
    <property type="term" value="P:cell surface receptor protein tyrosine kinase signaling pathway"/>
    <property type="evidence" value="ECO:0000318"/>
    <property type="project" value="GO_Central"/>
</dbReference>
<dbReference type="CDD" id="cd00192">
    <property type="entry name" value="PTKc"/>
    <property type="match status" value="1"/>
</dbReference>
<dbReference type="FunFam" id="3.30.200.20:FF:000586">
    <property type="entry name" value="Receptor protein-tyrosine kinase"/>
    <property type="match status" value="1"/>
</dbReference>
<dbReference type="FunFam" id="1.10.510.10:FF:001122">
    <property type="entry name" value="Receptor-like tyrosine-protein kinase kin-15"/>
    <property type="match status" value="1"/>
</dbReference>
<dbReference type="Gene3D" id="3.30.200.20">
    <property type="entry name" value="Phosphorylase Kinase, domain 1"/>
    <property type="match status" value="1"/>
</dbReference>
<dbReference type="Gene3D" id="1.10.510.10">
    <property type="entry name" value="Transferase(Phosphotransferase) domain 1"/>
    <property type="match status" value="1"/>
</dbReference>
<dbReference type="InterPro" id="IPR011009">
    <property type="entry name" value="Kinase-like_dom_sf"/>
</dbReference>
<dbReference type="InterPro" id="IPR000719">
    <property type="entry name" value="Prot_kinase_dom"/>
</dbReference>
<dbReference type="InterPro" id="IPR017441">
    <property type="entry name" value="Protein_kinase_ATP_BS"/>
</dbReference>
<dbReference type="InterPro" id="IPR050122">
    <property type="entry name" value="RTK"/>
</dbReference>
<dbReference type="InterPro" id="IPR001245">
    <property type="entry name" value="Ser-Thr/Tyr_kinase_cat_dom"/>
</dbReference>
<dbReference type="InterPro" id="IPR008266">
    <property type="entry name" value="Tyr_kinase_AS"/>
</dbReference>
<dbReference type="InterPro" id="IPR020635">
    <property type="entry name" value="Tyr_kinase_cat_dom"/>
</dbReference>
<dbReference type="PANTHER" id="PTHR24416:SF626">
    <property type="entry name" value="PROTEIN KINASE DOMAIN-CONTAINING PROTEIN-RELATED"/>
    <property type="match status" value="1"/>
</dbReference>
<dbReference type="PANTHER" id="PTHR24416">
    <property type="entry name" value="TYROSINE-PROTEIN KINASE RECEPTOR"/>
    <property type="match status" value="1"/>
</dbReference>
<dbReference type="Pfam" id="PF07714">
    <property type="entry name" value="PK_Tyr_Ser-Thr"/>
    <property type="match status" value="1"/>
</dbReference>
<dbReference type="PIRSF" id="PIRSF000615">
    <property type="entry name" value="TyrPK_CSF1-R"/>
    <property type="match status" value="1"/>
</dbReference>
<dbReference type="PRINTS" id="PR00109">
    <property type="entry name" value="TYRKINASE"/>
</dbReference>
<dbReference type="SMART" id="SM00219">
    <property type="entry name" value="TyrKc"/>
    <property type="match status" value="1"/>
</dbReference>
<dbReference type="SUPFAM" id="SSF56112">
    <property type="entry name" value="Protein kinase-like (PK-like)"/>
    <property type="match status" value="1"/>
</dbReference>
<dbReference type="PROSITE" id="PS00107">
    <property type="entry name" value="PROTEIN_KINASE_ATP"/>
    <property type="match status" value="1"/>
</dbReference>
<dbReference type="PROSITE" id="PS50011">
    <property type="entry name" value="PROTEIN_KINASE_DOM"/>
    <property type="match status" value="1"/>
</dbReference>
<dbReference type="PROSITE" id="PS00109">
    <property type="entry name" value="PROTEIN_KINASE_TYR"/>
    <property type="match status" value="1"/>
</dbReference>
<gene>
    <name type="primary">kin-15</name>
    <name type="ORF">M176.6</name>
</gene>
<sequence>MCLKMRYERIKYILLFSLMHLVYSNSTFESFTENPHISSQISNVLYMDQMFIIYILICILLILISVIVYLSKRYSQQMMQSSDNITNRRSNPEVRNKSNIYDLPPLLDVTSVNEETPIVKRPINERIENLEFDPRFEIDQAKLEISEDKLGSGFFGEVCYGLLSMRTSNTETDTLQKLSVAVKQSNDPTQENQEKMIEDETKLMCAIGRNPNILAIIGAVTANSGSARNLLIVEFVECGDLLKFLEEKKSIFKDELVYEKNGYLLPKSIRRKTYMFNENEDDVIEESLDSLCTSDLLSFSYQIAEGMEYLASIPCVHRDLALRNVLLNKNKTIRIADFGLARKYQVDGYYRITKGVGTPMPARWMAPEVMREGKCTEKSDVWSYGVSLYEMFSLGELPYSNVSNSDVFEHVVQGNQLPMPQYCHPKMYDRMKQFWNFDATFRPSFSKCVEFFEEHLSVSATNLLEQIQKTLKSEAERQSKLEDWIRRD</sequence>
<keyword id="KW-0067">ATP-binding</keyword>
<keyword id="KW-1003">Cell membrane</keyword>
<keyword id="KW-0325">Glycoprotein</keyword>
<keyword id="KW-0418">Kinase</keyword>
<keyword id="KW-0472">Membrane</keyword>
<keyword id="KW-0547">Nucleotide-binding</keyword>
<keyword id="KW-0675">Receptor</keyword>
<keyword id="KW-1185">Reference proteome</keyword>
<keyword id="KW-0732">Signal</keyword>
<keyword id="KW-0808">Transferase</keyword>
<keyword id="KW-0812">Transmembrane</keyword>
<keyword id="KW-1133">Transmembrane helix</keyword>
<keyword id="KW-0829">Tyrosine-protein kinase</keyword>
<evidence type="ECO:0000255" key="1"/>
<evidence type="ECO:0000255" key="2">
    <source>
        <dbReference type="PROSITE-ProRule" id="PRU00159"/>
    </source>
</evidence>
<evidence type="ECO:0000255" key="3">
    <source>
        <dbReference type="PROSITE-ProRule" id="PRU10028"/>
    </source>
</evidence>
<evidence type="ECO:0000305" key="4"/>
<reference key="1">
    <citation type="journal article" date="1993" name="Mol. Cell. Biol.">
        <title>Two novel transmembrane protein tyrosine kinases expressed during Caenorhabditis elegans hypodermal development.</title>
        <authorList>
            <person name="Morgan W.R."/>
            <person name="Greenwald I."/>
        </authorList>
    </citation>
    <scope>NUCLEOTIDE SEQUENCE [GENOMIC DNA]</scope>
    <source>
        <strain>Bristol N2</strain>
    </source>
</reference>
<reference key="2">
    <citation type="journal article" date="1998" name="Science">
        <title>Genome sequence of the nematode C. elegans: a platform for investigating biology.</title>
        <authorList>
            <consortium name="The C. elegans sequencing consortium"/>
        </authorList>
    </citation>
    <scope>NUCLEOTIDE SEQUENCE [LARGE SCALE GENOMIC DNA]</scope>
    <source>
        <strain>Bristol N2</strain>
    </source>
</reference>